<feature type="chain" id="PRO_0000052008" description="Eburicol 14-alpha-demethylase">
    <location>
        <begin position="1"/>
        <end position="515"/>
    </location>
</feature>
<feature type="transmembrane region" description="Helical" evidence="5">
    <location>
        <begin position="11"/>
        <end position="31"/>
    </location>
</feature>
<feature type="binding site" description="axial binding residue" evidence="1">
    <location>
        <position position="459"/>
    </location>
    <ligand>
        <name>heme</name>
        <dbReference type="ChEBI" id="CHEBI:30413"/>
    </ligand>
    <ligandPart>
        <name>Fe</name>
        <dbReference type="ChEBI" id="CHEBI:18248"/>
    </ligandPart>
</feature>
<organism>
    <name type="scientific">Penicillium italicum</name>
    <name type="common">Blue mold</name>
    <dbReference type="NCBI Taxonomy" id="40296"/>
    <lineage>
        <taxon>Eukaryota</taxon>
        <taxon>Fungi</taxon>
        <taxon>Dikarya</taxon>
        <taxon>Ascomycota</taxon>
        <taxon>Pezizomycotina</taxon>
        <taxon>Eurotiomycetes</taxon>
        <taxon>Eurotiomycetidae</taxon>
        <taxon>Eurotiales</taxon>
        <taxon>Aspergillaceae</taxon>
        <taxon>Penicillium</taxon>
    </lineage>
</organism>
<protein>
    <recommendedName>
        <fullName evidence="6">Eburicol 14-alpha-demethylase</fullName>
        <ecNumber>1.14.14.154</ecNumber>
    </recommendedName>
    <alternativeName>
        <fullName>CYPLI</fullName>
    </alternativeName>
    <alternativeName>
        <fullName>Cytochrome P450 51</fullName>
    </alternativeName>
    <alternativeName>
        <fullName evidence="6">Cytochrome P450-14DM</fullName>
    </alternativeName>
    <alternativeName>
        <fullName>Cytochrome P450-LIA1</fullName>
    </alternativeName>
    <alternativeName>
        <fullName>Sterol 14-alpha demethylase</fullName>
    </alternativeName>
</protein>
<evidence type="ECO:0000250" key="1"/>
<evidence type="ECO:0000250" key="2">
    <source>
        <dbReference type="UniProtKB" id="P10613"/>
    </source>
</evidence>
<evidence type="ECO:0000250" key="3">
    <source>
        <dbReference type="UniProtKB" id="P10614"/>
    </source>
</evidence>
<evidence type="ECO:0000250" key="4">
    <source>
        <dbReference type="UniProtKB" id="Q4WNT5"/>
    </source>
</evidence>
<evidence type="ECO:0000255" key="5"/>
<evidence type="ECO:0000303" key="6">
    <source>
    </source>
</evidence>
<evidence type="ECO:0000305" key="7"/>
<dbReference type="EC" id="1.14.14.154"/>
<dbReference type="EMBL" id="Z49750">
    <property type="protein sequence ID" value="CAA89824.1"/>
    <property type="molecule type" value="Genomic_DNA"/>
</dbReference>
<dbReference type="PIR" id="S65578">
    <property type="entry name" value="S65578"/>
</dbReference>
<dbReference type="SMR" id="Q12664"/>
<dbReference type="GO" id="GO:0005789">
    <property type="term" value="C:endoplasmic reticulum membrane"/>
    <property type="evidence" value="ECO:0007669"/>
    <property type="project" value="UniProtKB-SubCell"/>
</dbReference>
<dbReference type="GO" id="GO:0020037">
    <property type="term" value="F:heme binding"/>
    <property type="evidence" value="ECO:0007669"/>
    <property type="project" value="InterPro"/>
</dbReference>
<dbReference type="GO" id="GO:0005506">
    <property type="term" value="F:iron ion binding"/>
    <property type="evidence" value="ECO:0007669"/>
    <property type="project" value="InterPro"/>
</dbReference>
<dbReference type="GO" id="GO:0008398">
    <property type="term" value="F:sterol 14-demethylase activity"/>
    <property type="evidence" value="ECO:0007669"/>
    <property type="project" value="UniProtKB-EC"/>
</dbReference>
<dbReference type="GO" id="GO:0043386">
    <property type="term" value="P:mycotoxin biosynthetic process"/>
    <property type="evidence" value="ECO:0007669"/>
    <property type="project" value="UniProtKB-ARBA"/>
</dbReference>
<dbReference type="GO" id="GO:0016126">
    <property type="term" value="P:sterol biosynthetic process"/>
    <property type="evidence" value="ECO:0007669"/>
    <property type="project" value="UniProtKB-KW"/>
</dbReference>
<dbReference type="CDD" id="cd11042">
    <property type="entry name" value="CYP51-like"/>
    <property type="match status" value="1"/>
</dbReference>
<dbReference type="FunFam" id="1.10.630.10:FF:000033">
    <property type="entry name" value="14-alpha sterol demethylase"/>
    <property type="match status" value="1"/>
</dbReference>
<dbReference type="Gene3D" id="1.10.630.10">
    <property type="entry name" value="Cytochrome P450"/>
    <property type="match status" value="1"/>
</dbReference>
<dbReference type="InterPro" id="IPR050529">
    <property type="entry name" value="CYP450_sterol_14alpha_dmase"/>
</dbReference>
<dbReference type="InterPro" id="IPR001128">
    <property type="entry name" value="Cyt_P450"/>
</dbReference>
<dbReference type="InterPro" id="IPR017972">
    <property type="entry name" value="Cyt_P450_CS"/>
</dbReference>
<dbReference type="InterPro" id="IPR002403">
    <property type="entry name" value="Cyt_P450_E_grp-IV"/>
</dbReference>
<dbReference type="InterPro" id="IPR036396">
    <property type="entry name" value="Cyt_P450_sf"/>
</dbReference>
<dbReference type="PANTHER" id="PTHR24304:SF2">
    <property type="entry name" value="24-HYDROXYCHOLESTEROL 7-ALPHA-HYDROXYLASE"/>
    <property type="match status" value="1"/>
</dbReference>
<dbReference type="PANTHER" id="PTHR24304">
    <property type="entry name" value="CYTOCHROME P450 FAMILY 7"/>
    <property type="match status" value="1"/>
</dbReference>
<dbReference type="Pfam" id="PF00067">
    <property type="entry name" value="p450"/>
    <property type="match status" value="1"/>
</dbReference>
<dbReference type="PRINTS" id="PR00465">
    <property type="entry name" value="EP450IV"/>
</dbReference>
<dbReference type="PRINTS" id="PR00385">
    <property type="entry name" value="P450"/>
</dbReference>
<dbReference type="SUPFAM" id="SSF48264">
    <property type="entry name" value="Cytochrome P450"/>
    <property type="match status" value="1"/>
</dbReference>
<dbReference type="PROSITE" id="PS00086">
    <property type="entry name" value="CYTOCHROME_P450"/>
    <property type="match status" value="1"/>
</dbReference>
<reference key="1">
    <citation type="journal article" date="1996" name="Mol. Gen. Genet.">
        <title>Isolation and molecular characterisation of the gene encoding eburicol 14 alpha-demethylase (cYP51) from Penicillium italicum.</title>
        <authorList>
            <person name="van Nistelrooy J.G.M."/>
            <person name="van den Brink J.M."/>
            <person name="van Kan J.A.L."/>
            <person name="van Gorcom R.F.M."/>
            <person name="de Waard M.A."/>
        </authorList>
    </citation>
    <scope>NUCLEOTIDE SEQUENCE [GENOMIC DNA]</scope>
    <source>
        <strain>W5</strain>
    </source>
</reference>
<proteinExistence type="inferred from homology"/>
<keyword id="KW-0256">Endoplasmic reticulum</keyword>
<keyword id="KW-0349">Heme</keyword>
<keyword id="KW-0408">Iron</keyword>
<keyword id="KW-0444">Lipid biosynthesis</keyword>
<keyword id="KW-0443">Lipid metabolism</keyword>
<keyword id="KW-0472">Membrane</keyword>
<keyword id="KW-0479">Metal-binding</keyword>
<keyword id="KW-0492">Microsome</keyword>
<keyword id="KW-0503">Monooxygenase</keyword>
<keyword id="KW-0560">Oxidoreductase</keyword>
<keyword id="KW-0752">Steroid biosynthesis</keyword>
<keyword id="KW-0753">Steroid metabolism</keyword>
<keyword id="KW-0756">Sterol biosynthesis</keyword>
<keyword id="KW-1207">Sterol metabolism</keyword>
<keyword id="KW-0812">Transmembrane</keyword>
<keyword id="KW-1133">Transmembrane helix</keyword>
<accession>Q12664</accession>
<name>CP51_PENIT</name>
<comment type="function">
    <text evidence="2 3 4">Sterol 14alpha-demethylase that plays a critical role in the third module of ergosterol biosynthesis pathway, being ergosterol the major sterol component in fungal membranes that participates in a variety of functions (By similarity). The third module or late pathway involves the ergosterol synthesis itself through consecutive reactions that mainly occur in the endoplasmic reticulum (ER) membrane (By similarity). In filamentous fungi, during the initial step of this module, lanosterol (lanosta-8,24-dien-3beta-ol) can be metabolized to eburicol (By similarity). Sterol 14alpha-demethylase catalyzes the three-step oxidative removal of the 14alpha-methyl group (C-32) of both these sterols in the form of formate, and converts eburicol and lanosterol to 14-demethyleburicol (4,4,24-trimethylergosta-8,14,24(28)-trienol) and 4,4-dimethyl-5alpha-cholesta-8,14,24-trien-3beta-ol, respectively, which are further metabolized by other enzymes in the pathway to ergosterol (By similarity). Can also use substrates not intrinsic to fungi, such as 24,25-dihydrolanosterol (DHL), producing 4,4-dimethyl-8,14-cholestadien-3-beta-ol, but at lower rates than the endogenous substrates (By similarity).</text>
</comment>
<comment type="catalytic activity">
    <reaction evidence="3">
        <text>a 14alpha-methyl steroid + 3 reduced [NADPH--hemoprotein reductase] + 3 O2 = a Delta(14) steroid + formate + 3 oxidized [NADPH--hemoprotein reductase] + 4 H2O + 4 H(+)</text>
        <dbReference type="Rhea" id="RHEA:54028"/>
        <dbReference type="Rhea" id="RHEA-COMP:11964"/>
        <dbReference type="Rhea" id="RHEA-COMP:11965"/>
        <dbReference type="ChEBI" id="CHEBI:15377"/>
        <dbReference type="ChEBI" id="CHEBI:15378"/>
        <dbReference type="ChEBI" id="CHEBI:15379"/>
        <dbReference type="ChEBI" id="CHEBI:15740"/>
        <dbReference type="ChEBI" id="CHEBI:57618"/>
        <dbReference type="ChEBI" id="CHEBI:58210"/>
        <dbReference type="ChEBI" id="CHEBI:138029"/>
        <dbReference type="ChEBI" id="CHEBI:138031"/>
        <dbReference type="EC" id="1.14.14.154"/>
    </reaction>
    <physiologicalReaction direction="left-to-right" evidence="3">
        <dbReference type="Rhea" id="RHEA:54029"/>
    </physiologicalReaction>
</comment>
<comment type="catalytic activity">
    <reaction evidence="3">
        <text>a 14alpha-methyl steroid + reduced [NADPH--hemoprotein reductase] + O2 = a 14alpha-hydroxymethyl steroid + oxidized [NADPH--hemoprotein reductase] + H2O + H(+)</text>
        <dbReference type="Rhea" id="RHEA:68060"/>
        <dbReference type="Rhea" id="RHEA-COMP:11964"/>
        <dbReference type="Rhea" id="RHEA-COMP:11965"/>
        <dbReference type="ChEBI" id="CHEBI:15377"/>
        <dbReference type="ChEBI" id="CHEBI:15378"/>
        <dbReference type="ChEBI" id="CHEBI:15379"/>
        <dbReference type="ChEBI" id="CHEBI:57618"/>
        <dbReference type="ChEBI" id="CHEBI:58210"/>
        <dbReference type="ChEBI" id="CHEBI:138029"/>
        <dbReference type="ChEBI" id="CHEBI:176901"/>
    </reaction>
    <physiologicalReaction direction="left-to-right" evidence="3">
        <dbReference type="Rhea" id="RHEA:68061"/>
    </physiologicalReaction>
</comment>
<comment type="catalytic activity">
    <reaction evidence="3">
        <text>a 14alpha-hydroxymethyl steroid + reduced [NADPH--hemoprotein reductase] + O2 = a 14alpha-formyl steroid + oxidized [NADPH--hemoprotein reductase] + 2 H2O + H(+)</text>
        <dbReference type="Rhea" id="RHEA:68064"/>
        <dbReference type="Rhea" id="RHEA-COMP:11964"/>
        <dbReference type="Rhea" id="RHEA-COMP:11965"/>
        <dbReference type="ChEBI" id="CHEBI:15377"/>
        <dbReference type="ChEBI" id="CHEBI:15378"/>
        <dbReference type="ChEBI" id="CHEBI:15379"/>
        <dbReference type="ChEBI" id="CHEBI:57618"/>
        <dbReference type="ChEBI" id="CHEBI:58210"/>
        <dbReference type="ChEBI" id="CHEBI:176901"/>
        <dbReference type="ChEBI" id="CHEBI:176902"/>
    </reaction>
    <physiologicalReaction direction="left-to-right" evidence="3">
        <dbReference type="Rhea" id="RHEA:68065"/>
    </physiologicalReaction>
</comment>
<comment type="catalytic activity">
    <reaction evidence="3">
        <text>a 14alpha-formyl steroid + reduced [NADPH--hemoprotein reductase] + O2 = a Delta(14) steroid + formate + oxidized [NADPH--hemoprotein reductase] + H2O + 2 H(+)</text>
        <dbReference type="Rhea" id="RHEA:68068"/>
        <dbReference type="Rhea" id="RHEA-COMP:11964"/>
        <dbReference type="Rhea" id="RHEA-COMP:11965"/>
        <dbReference type="ChEBI" id="CHEBI:15377"/>
        <dbReference type="ChEBI" id="CHEBI:15378"/>
        <dbReference type="ChEBI" id="CHEBI:15379"/>
        <dbReference type="ChEBI" id="CHEBI:15740"/>
        <dbReference type="ChEBI" id="CHEBI:57618"/>
        <dbReference type="ChEBI" id="CHEBI:58210"/>
        <dbReference type="ChEBI" id="CHEBI:138031"/>
        <dbReference type="ChEBI" id="CHEBI:176902"/>
    </reaction>
    <physiologicalReaction direction="left-to-right" evidence="3">
        <dbReference type="Rhea" id="RHEA:68069"/>
    </physiologicalReaction>
</comment>
<comment type="catalytic activity">
    <reaction evidence="3">
        <text>lanosterol + 3 reduced [NADPH--hemoprotein reductase] + 3 O2 = 4,4-dimethyl-5alpha-cholesta-8,14,24-trien-3beta-ol + formate + 3 oxidized [NADPH--hemoprotein reductase] + 4 H2O + 4 H(+)</text>
        <dbReference type="Rhea" id="RHEA:25286"/>
        <dbReference type="Rhea" id="RHEA-COMP:11964"/>
        <dbReference type="Rhea" id="RHEA-COMP:11965"/>
        <dbReference type="ChEBI" id="CHEBI:15377"/>
        <dbReference type="ChEBI" id="CHEBI:15378"/>
        <dbReference type="ChEBI" id="CHEBI:15379"/>
        <dbReference type="ChEBI" id="CHEBI:15740"/>
        <dbReference type="ChEBI" id="CHEBI:16521"/>
        <dbReference type="ChEBI" id="CHEBI:17813"/>
        <dbReference type="ChEBI" id="CHEBI:57618"/>
        <dbReference type="ChEBI" id="CHEBI:58210"/>
        <dbReference type="EC" id="1.14.14.154"/>
    </reaction>
    <physiologicalReaction direction="left-to-right" evidence="3">
        <dbReference type="Rhea" id="RHEA:25287"/>
    </physiologicalReaction>
</comment>
<comment type="catalytic activity">
    <reaction evidence="3">
        <text>lanosterol + reduced [NADPH--hemoprotein reductase] + O2 = 32-hydroxylanosterol + oxidized [NADPH--hemoprotein reductase] + H2O + H(+)</text>
        <dbReference type="Rhea" id="RHEA:75103"/>
        <dbReference type="Rhea" id="RHEA-COMP:11964"/>
        <dbReference type="Rhea" id="RHEA-COMP:11965"/>
        <dbReference type="ChEBI" id="CHEBI:15377"/>
        <dbReference type="ChEBI" id="CHEBI:15378"/>
        <dbReference type="ChEBI" id="CHEBI:15379"/>
        <dbReference type="ChEBI" id="CHEBI:16521"/>
        <dbReference type="ChEBI" id="CHEBI:57618"/>
        <dbReference type="ChEBI" id="CHEBI:58210"/>
        <dbReference type="ChEBI" id="CHEBI:166806"/>
    </reaction>
    <physiologicalReaction direction="left-to-right" evidence="3">
        <dbReference type="Rhea" id="RHEA:75104"/>
    </physiologicalReaction>
</comment>
<comment type="catalytic activity">
    <reaction evidence="3">
        <text>32-hydroxylanosterol + reduced [NADPH--hemoprotein reductase] + O2 = 32-oxolanosterol + oxidized [NADPH--hemoprotein reductase] + 2 H2O + H(+)</text>
        <dbReference type="Rhea" id="RHEA:75107"/>
        <dbReference type="Rhea" id="RHEA-COMP:11964"/>
        <dbReference type="Rhea" id="RHEA-COMP:11965"/>
        <dbReference type="ChEBI" id="CHEBI:15377"/>
        <dbReference type="ChEBI" id="CHEBI:15378"/>
        <dbReference type="ChEBI" id="CHEBI:15379"/>
        <dbReference type="ChEBI" id="CHEBI:57618"/>
        <dbReference type="ChEBI" id="CHEBI:58210"/>
        <dbReference type="ChEBI" id="CHEBI:166681"/>
        <dbReference type="ChEBI" id="CHEBI:166806"/>
    </reaction>
    <physiologicalReaction direction="left-to-right" evidence="3">
        <dbReference type="Rhea" id="RHEA:75108"/>
    </physiologicalReaction>
</comment>
<comment type="catalytic activity">
    <reaction evidence="3">
        <text>32-oxolanosterol + reduced [NADPH--hemoprotein reductase] + O2 = 4,4-dimethyl-5alpha-cholesta-8,14,24-trien-3beta-ol + formate + oxidized [NADPH--hemoprotein reductase] + H2O + 2 H(+)</text>
        <dbReference type="Rhea" id="RHEA:75111"/>
        <dbReference type="Rhea" id="RHEA-COMP:11964"/>
        <dbReference type="Rhea" id="RHEA-COMP:11965"/>
        <dbReference type="ChEBI" id="CHEBI:15377"/>
        <dbReference type="ChEBI" id="CHEBI:15378"/>
        <dbReference type="ChEBI" id="CHEBI:15379"/>
        <dbReference type="ChEBI" id="CHEBI:15740"/>
        <dbReference type="ChEBI" id="CHEBI:17813"/>
        <dbReference type="ChEBI" id="CHEBI:57618"/>
        <dbReference type="ChEBI" id="CHEBI:58210"/>
        <dbReference type="ChEBI" id="CHEBI:166681"/>
    </reaction>
    <physiologicalReaction direction="left-to-right" evidence="3">
        <dbReference type="Rhea" id="RHEA:75112"/>
    </physiologicalReaction>
</comment>
<comment type="catalytic activity">
    <reaction evidence="2">
        <text>eburicol + 3 reduced [NADPH--hemoprotein reductase] + 3 O2 = 14-demethyleburicol + formate + 3 oxidized [NADPH--hemoprotein reductase] + 4 H2O + 4 H(+)</text>
        <dbReference type="Rhea" id="RHEA:75439"/>
        <dbReference type="Rhea" id="RHEA-COMP:11964"/>
        <dbReference type="Rhea" id="RHEA-COMP:11965"/>
        <dbReference type="ChEBI" id="CHEBI:15377"/>
        <dbReference type="ChEBI" id="CHEBI:15378"/>
        <dbReference type="ChEBI" id="CHEBI:15379"/>
        <dbReference type="ChEBI" id="CHEBI:15740"/>
        <dbReference type="ChEBI" id="CHEBI:57618"/>
        <dbReference type="ChEBI" id="CHEBI:58210"/>
        <dbReference type="ChEBI" id="CHEBI:70315"/>
        <dbReference type="ChEBI" id="CHEBI:194330"/>
    </reaction>
    <physiologicalReaction direction="left-to-right" evidence="2">
        <dbReference type="Rhea" id="RHEA:75440"/>
    </physiologicalReaction>
</comment>
<comment type="catalytic activity">
    <reaction evidence="3">
        <text>eburicol + reduced [NADPH--hemoprotein reductase] + O2 = 32-hydroxyeburicol + oxidized [NADPH--hemoprotein reductase] + H2O + H(+)</text>
        <dbReference type="Rhea" id="RHEA:75427"/>
        <dbReference type="Rhea" id="RHEA-COMP:11964"/>
        <dbReference type="Rhea" id="RHEA-COMP:11965"/>
        <dbReference type="ChEBI" id="CHEBI:15377"/>
        <dbReference type="ChEBI" id="CHEBI:15378"/>
        <dbReference type="ChEBI" id="CHEBI:15379"/>
        <dbReference type="ChEBI" id="CHEBI:57618"/>
        <dbReference type="ChEBI" id="CHEBI:58210"/>
        <dbReference type="ChEBI" id="CHEBI:70315"/>
        <dbReference type="ChEBI" id="CHEBI:194328"/>
    </reaction>
    <physiologicalReaction direction="left-to-right" evidence="3">
        <dbReference type="Rhea" id="RHEA:75428"/>
    </physiologicalReaction>
</comment>
<comment type="catalytic activity">
    <reaction evidence="3">
        <text>32-hydroxyeburicol + reduced [NADPH--hemoprotein reductase] + O2 = 32-oxoeburicol + oxidized [NADPH--hemoprotein reductase] + 2 H2O + H(+)</text>
        <dbReference type="Rhea" id="RHEA:75431"/>
        <dbReference type="Rhea" id="RHEA-COMP:11964"/>
        <dbReference type="Rhea" id="RHEA-COMP:11965"/>
        <dbReference type="ChEBI" id="CHEBI:15377"/>
        <dbReference type="ChEBI" id="CHEBI:15378"/>
        <dbReference type="ChEBI" id="CHEBI:15379"/>
        <dbReference type="ChEBI" id="CHEBI:57618"/>
        <dbReference type="ChEBI" id="CHEBI:58210"/>
        <dbReference type="ChEBI" id="CHEBI:194328"/>
        <dbReference type="ChEBI" id="CHEBI:194329"/>
    </reaction>
    <physiologicalReaction direction="left-to-right" evidence="3">
        <dbReference type="Rhea" id="RHEA:75432"/>
    </physiologicalReaction>
</comment>
<comment type="catalytic activity">
    <reaction evidence="3">
        <text>32-oxoeburicol + reduced [NADPH--hemoprotein reductase] + O2 = 14-demethyleburicol + formate + oxidized [NADPH--hemoprotein reductase] + H2O + 2 H(+)</text>
        <dbReference type="Rhea" id="RHEA:75435"/>
        <dbReference type="Rhea" id="RHEA-COMP:11964"/>
        <dbReference type="Rhea" id="RHEA-COMP:11965"/>
        <dbReference type="ChEBI" id="CHEBI:15377"/>
        <dbReference type="ChEBI" id="CHEBI:15378"/>
        <dbReference type="ChEBI" id="CHEBI:15379"/>
        <dbReference type="ChEBI" id="CHEBI:15740"/>
        <dbReference type="ChEBI" id="CHEBI:57618"/>
        <dbReference type="ChEBI" id="CHEBI:58210"/>
        <dbReference type="ChEBI" id="CHEBI:194329"/>
        <dbReference type="ChEBI" id="CHEBI:194330"/>
    </reaction>
    <physiologicalReaction direction="left-to-right" evidence="3">
        <dbReference type="Rhea" id="RHEA:75436"/>
    </physiologicalReaction>
</comment>
<comment type="cofactor">
    <cofactor evidence="1">
        <name>heme</name>
        <dbReference type="ChEBI" id="CHEBI:30413"/>
    </cofactor>
</comment>
<comment type="subcellular location">
    <subcellularLocation>
        <location evidence="7">Endoplasmic reticulum membrane</location>
    </subcellularLocation>
    <subcellularLocation>
        <location evidence="7">Microsome membrane</location>
    </subcellularLocation>
</comment>
<comment type="similarity">
    <text evidence="7">Belongs to the cytochrome P450 family.</text>
</comment>
<sequence length="515" mass="58137">MDLVPLVTGQILGIAYYTTGLFLVSIVLNVIKQLIFYNRKEPPVVFHWIPFIGSTIAYGMDPYQFFFASRAKYGDIFTFILLGKKTTVYLGVEGNEFILNGKLKDVNAEEVYGKLTTPVFGSDVVYDCPNSKLMEQKKFIKYGLSQEALESYVPLIADETNAYIKSSPNFKGQSGTIDLAAAMAEITIFTAARTLQGEEVRSKLTSEFADLFHDLDLGFSPINFMLPWAPLPHNASAIKHTTYARDLSGNYPSATGSWRRRQRRRQDKSKGTDMISNLMRCVYRDGTPIPDKEIAHMMITLLMAGQHSSSAISCWILLRLASQPEMAEKLHAEQIKNLGADLPPLQYKDMDKLPLLRNVIKETLRLHSSIHTLMRKVKNPMPVPGTDFVVPPSHTLLSSPGVTARDERHFRDPLRWDPHRWESRVEVEDSSDTVDYGYGAVSKGTRSPYLPFGAGRHRCIGEKFAYLNLEVIVATLVREFRFFNPEGMEGVPDTDYSSLFSRPVQPATVRWEVRS</sequence>
<gene>
    <name type="primary">CYP51</name>
</gene>